<accession>C1DRR3</accession>
<reference key="1">
    <citation type="journal article" date="2009" name="J. Bacteriol.">
        <title>Genome sequence of Azotobacter vinelandii, an obligate aerobe specialized to support diverse anaerobic metabolic processes.</title>
        <authorList>
            <person name="Setubal J.C."/>
            <person name="Dos Santos P."/>
            <person name="Goldman B.S."/>
            <person name="Ertesvaag H."/>
            <person name="Espin G."/>
            <person name="Rubio L.M."/>
            <person name="Valla S."/>
            <person name="Almeida N.F."/>
            <person name="Balasubramanian D."/>
            <person name="Cromes L."/>
            <person name="Curatti L."/>
            <person name="Du Z."/>
            <person name="Godsy E."/>
            <person name="Goodner B."/>
            <person name="Hellner-Burris K."/>
            <person name="Hernandez J.A."/>
            <person name="Houmiel K."/>
            <person name="Imperial J."/>
            <person name="Kennedy C."/>
            <person name="Larson T.J."/>
            <person name="Latreille P."/>
            <person name="Ligon L.S."/>
            <person name="Lu J."/>
            <person name="Maerk M."/>
            <person name="Miller N.M."/>
            <person name="Norton S."/>
            <person name="O'Carroll I.P."/>
            <person name="Paulsen I."/>
            <person name="Raulfs E.C."/>
            <person name="Roemer R."/>
            <person name="Rosser J."/>
            <person name="Segura D."/>
            <person name="Slater S."/>
            <person name="Stricklin S.L."/>
            <person name="Studholme D.J."/>
            <person name="Sun J."/>
            <person name="Viana C.J."/>
            <person name="Wallin E."/>
            <person name="Wang B."/>
            <person name="Wheeler C."/>
            <person name="Zhu H."/>
            <person name="Dean D.R."/>
            <person name="Dixon R."/>
            <person name="Wood D."/>
        </authorList>
    </citation>
    <scope>NUCLEOTIDE SEQUENCE [LARGE SCALE GENOMIC DNA]</scope>
    <source>
        <strain>DJ / ATCC BAA-1303</strain>
    </source>
</reference>
<proteinExistence type="inferred from homology"/>
<feature type="chain" id="PRO_1000204445" description="Cytidylate kinase">
    <location>
        <begin position="1"/>
        <end position="229"/>
    </location>
</feature>
<feature type="binding site" evidence="1">
    <location>
        <begin position="12"/>
        <end position="20"/>
    </location>
    <ligand>
        <name>ATP</name>
        <dbReference type="ChEBI" id="CHEBI:30616"/>
    </ligand>
</feature>
<sequence>MSVRPVVITIDGPSGSGKGTVAGLLAKRLGWNLLDSGALYRLLAFAARNHGVDLTNEEALKVLAAHLDVQFVTSTDLHPQQIILEGEDVTDAIRNEQVGAGASQVASLPAVREALLQRQHAFLEPPGLVADGRDMGTVVFPDAPLKVFLTARAEERARRRYQQLKESGVDANLSSLLGEISKRDERDSQRAVAPLKAAPDAIQLDSTELTIEQVVERIMSEIAARDLAG</sequence>
<protein>
    <recommendedName>
        <fullName evidence="1">Cytidylate kinase</fullName>
        <shortName evidence="1">CK</shortName>
        <ecNumber evidence="1">2.7.4.25</ecNumber>
    </recommendedName>
    <alternativeName>
        <fullName evidence="1">Cytidine monophosphate kinase</fullName>
        <shortName evidence="1">CMP kinase</shortName>
    </alternativeName>
</protein>
<name>KCY_AZOVD</name>
<gene>
    <name evidence="1" type="primary">cmk</name>
    <name type="ordered locus">Avin_15860</name>
</gene>
<comment type="catalytic activity">
    <reaction evidence="1">
        <text>CMP + ATP = CDP + ADP</text>
        <dbReference type="Rhea" id="RHEA:11600"/>
        <dbReference type="ChEBI" id="CHEBI:30616"/>
        <dbReference type="ChEBI" id="CHEBI:58069"/>
        <dbReference type="ChEBI" id="CHEBI:60377"/>
        <dbReference type="ChEBI" id="CHEBI:456216"/>
        <dbReference type="EC" id="2.7.4.25"/>
    </reaction>
</comment>
<comment type="catalytic activity">
    <reaction evidence="1">
        <text>dCMP + ATP = dCDP + ADP</text>
        <dbReference type="Rhea" id="RHEA:25094"/>
        <dbReference type="ChEBI" id="CHEBI:30616"/>
        <dbReference type="ChEBI" id="CHEBI:57566"/>
        <dbReference type="ChEBI" id="CHEBI:58593"/>
        <dbReference type="ChEBI" id="CHEBI:456216"/>
        <dbReference type="EC" id="2.7.4.25"/>
    </reaction>
</comment>
<comment type="subcellular location">
    <subcellularLocation>
        <location evidence="1">Cytoplasm</location>
    </subcellularLocation>
</comment>
<comment type="similarity">
    <text evidence="1">Belongs to the cytidylate kinase family. Type 1 subfamily.</text>
</comment>
<dbReference type="EC" id="2.7.4.25" evidence="1"/>
<dbReference type="EMBL" id="CP001157">
    <property type="protein sequence ID" value="ACO77801.1"/>
    <property type="molecule type" value="Genomic_DNA"/>
</dbReference>
<dbReference type="RefSeq" id="WP_012700216.1">
    <property type="nucleotide sequence ID" value="NC_012560.1"/>
</dbReference>
<dbReference type="SMR" id="C1DRR3"/>
<dbReference type="STRING" id="322710.Avin_15860"/>
<dbReference type="EnsemblBacteria" id="ACO77801">
    <property type="protein sequence ID" value="ACO77801"/>
    <property type="gene ID" value="Avin_15860"/>
</dbReference>
<dbReference type="GeneID" id="88184877"/>
<dbReference type="KEGG" id="avn:Avin_15860"/>
<dbReference type="eggNOG" id="COG0283">
    <property type="taxonomic scope" value="Bacteria"/>
</dbReference>
<dbReference type="HOGENOM" id="CLU_079959_2_0_6"/>
<dbReference type="OrthoDB" id="9807434at2"/>
<dbReference type="Proteomes" id="UP000002424">
    <property type="component" value="Chromosome"/>
</dbReference>
<dbReference type="GO" id="GO:0005829">
    <property type="term" value="C:cytosol"/>
    <property type="evidence" value="ECO:0007669"/>
    <property type="project" value="TreeGrafter"/>
</dbReference>
<dbReference type="GO" id="GO:0005524">
    <property type="term" value="F:ATP binding"/>
    <property type="evidence" value="ECO:0007669"/>
    <property type="project" value="UniProtKB-UniRule"/>
</dbReference>
<dbReference type="GO" id="GO:0036430">
    <property type="term" value="F:CMP kinase activity"/>
    <property type="evidence" value="ECO:0007669"/>
    <property type="project" value="RHEA"/>
</dbReference>
<dbReference type="GO" id="GO:0036431">
    <property type="term" value="F:dCMP kinase activity"/>
    <property type="evidence" value="ECO:0007669"/>
    <property type="project" value="RHEA"/>
</dbReference>
<dbReference type="GO" id="GO:0015949">
    <property type="term" value="P:nucleobase-containing small molecule interconversion"/>
    <property type="evidence" value="ECO:0007669"/>
    <property type="project" value="TreeGrafter"/>
</dbReference>
<dbReference type="GO" id="GO:0006220">
    <property type="term" value="P:pyrimidine nucleotide metabolic process"/>
    <property type="evidence" value="ECO:0007669"/>
    <property type="project" value="UniProtKB-UniRule"/>
</dbReference>
<dbReference type="CDD" id="cd02020">
    <property type="entry name" value="CMPK"/>
    <property type="match status" value="1"/>
</dbReference>
<dbReference type="FunFam" id="3.40.50.300:FF:000262">
    <property type="entry name" value="Cytidylate kinase"/>
    <property type="match status" value="1"/>
</dbReference>
<dbReference type="Gene3D" id="3.40.50.300">
    <property type="entry name" value="P-loop containing nucleotide triphosphate hydrolases"/>
    <property type="match status" value="1"/>
</dbReference>
<dbReference type="HAMAP" id="MF_00238">
    <property type="entry name" value="Cytidyl_kinase_type1"/>
    <property type="match status" value="1"/>
</dbReference>
<dbReference type="InterPro" id="IPR003136">
    <property type="entry name" value="Cytidylate_kin"/>
</dbReference>
<dbReference type="InterPro" id="IPR011994">
    <property type="entry name" value="Cytidylate_kinase_dom"/>
</dbReference>
<dbReference type="InterPro" id="IPR027417">
    <property type="entry name" value="P-loop_NTPase"/>
</dbReference>
<dbReference type="NCBIfam" id="TIGR00017">
    <property type="entry name" value="cmk"/>
    <property type="match status" value="1"/>
</dbReference>
<dbReference type="PANTHER" id="PTHR21299:SF2">
    <property type="entry name" value="CYTIDYLATE KINASE"/>
    <property type="match status" value="1"/>
</dbReference>
<dbReference type="PANTHER" id="PTHR21299">
    <property type="entry name" value="CYTIDYLATE KINASE/PANTOATE-BETA-ALANINE LIGASE"/>
    <property type="match status" value="1"/>
</dbReference>
<dbReference type="Pfam" id="PF02224">
    <property type="entry name" value="Cytidylate_kin"/>
    <property type="match status" value="1"/>
</dbReference>
<dbReference type="SUPFAM" id="SSF52540">
    <property type="entry name" value="P-loop containing nucleoside triphosphate hydrolases"/>
    <property type="match status" value="1"/>
</dbReference>
<evidence type="ECO:0000255" key="1">
    <source>
        <dbReference type="HAMAP-Rule" id="MF_00238"/>
    </source>
</evidence>
<keyword id="KW-0067">ATP-binding</keyword>
<keyword id="KW-0963">Cytoplasm</keyword>
<keyword id="KW-0418">Kinase</keyword>
<keyword id="KW-0547">Nucleotide-binding</keyword>
<keyword id="KW-0808">Transferase</keyword>
<organism>
    <name type="scientific">Azotobacter vinelandii (strain DJ / ATCC BAA-1303)</name>
    <dbReference type="NCBI Taxonomy" id="322710"/>
    <lineage>
        <taxon>Bacteria</taxon>
        <taxon>Pseudomonadati</taxon>
        <taxon>Pseudomonadota</taxon>
        <taxon>Gammaproteobacteria</taxon>
        <taxon>Pseudomonadales</taxon>
        <taxon>Pseudomonadaceae</taxon>
        <taxon>Azotobacter</taxon>
    </lineage>
</organism>